<organism>
    <name type="scientific">Rhodococcus jostii (strain RHA1)</name>
    <dbReference type="NCBI Taxonomy" id="101510"/>
    <lineage>
        <taxon>Bacteria</taxon>
        <taxon>Bacillati</taxon>
        <taxon>Actinomycetota</taxon>
        <taxon>Actinomycetes</taxon>
        <taxon>Mycobacteriales</taxon>
        <taxon>Nocardiaceae</taxon>
        <taxon>Rhodococcus</taxon>
    </lineage>
</organism>
<comment type="function">
    <text evidence="1">Bifunctional enzyme with both catalase and broad-spectrum peroxidase activity.</text>
</comment>
<comment type="catalytic activity">
    <reaction evidence="1">
        <text>H2O2 + AH2 = A + 2 H2O</text>
        <dbReference type="Rhea" id="RHEA:30275"/>
        <dbReference type="ChEBI" id="CHEBI:13193"/>
        <dbReference type="ChEBI" id="CHEBI:15377"/>
        <dbReference type="ChEBI" id="CHEBI:16240"/>
        <dbReference type="ChEBI" id="CHEBI:17499"/>
        <dbReference type="EC" id="1.11.1.21"/>
    </reaction>
</comment>
<comment type="catalytic activity">
    <reaction evidence="1">
        <text>2 H2O2 = O2 + 2 H2O</text>
        <dbReference type="Rhea" id="RHEA:20309"/>
        <dbReference type="ChEBI" id="CHEBI:15377"/>
        <dbReference type="ChEBI" id="CHEBI:15379"/>
        <dbReference type="ChEBI" id="CHEBI:16240"/>
        <dbReference type="EC" id="1.11.1.21"/>
    </reaction>
</comment>
<comment type="cofactor">
    <cofactor evidence="1">
        <name>heme b</name>
        <dbReference type="ChEBI" id="CHEBI:60344"/>
    </cofactor>
    <text evidence="1">Binds 1 heme b (iron(II)-protoporphyrin IX) group per dimer.</text>
</comment>
<comment type="subunit">
    <text evidence="1">Homodimer or homotetramer.</text>
</comment>
<comment type="PTM">
    <text evidence="1">Formation of the three residue Trp-Tyr-Met cross-link is important for the catalase, but not the peroxidase activity of the enzyme.</text>
</comment>
<comment type="similarity">
    <text evidence="1">Belongs to the peroxidase family. Peroxidase/catalase subfamily.</text>
</comment>
<proteinExistence type="inferred from homology"/>
<feature type="chain" id="PRO_0000354890" description="Catalase-peroxidase">
    <location>
        <begin position="1"/>
        <end position="742"/>
    </location>
</feature>
<feature type="region of interest" description="Disordered" evidence="2">
    <location>
        <begin position="1"/>
        <end position="43"/>
    </location>
</feature>
<feature type="compositionally biased region" description="Polar residues" evidence="2">
    <location>
        <begin position="11"/>
        <end position="20"/>
    </location>
</feature>
<feature type="active site" description="Proton acceptor" evidence="1">
    <location>
        <position position="110"/>
    </location>
</feature>
<feature type="binding site" description="axial binding residue" evidence="1">
    <location>
        <position position="272"/>
    </location>
    <ligand>
        <name>heme b</name>
        <dbReference type="ChEBI" id="CHEBI:60344"/>
    </ligand>
    <ligandPart>
        <name>Fe</name>
        <dbReference type="ChEBI" id="CHEBI:18248"/>
    </ligandPart>
</feature>
<feature type="site" description="Transition state stabilizer" evidence="1">
    <location>
        <position position="106"/>
    </location>
</feature>
<feature type="cross-link" description="Tryptophyl-tyrosyl-methioninium (Trp-Tyr) (with M-257)" evidence="1">
    <location>
        <begin position="109"/>
        <end position="231"/>
    </location>
</feature>
<feature type="cross-link" description="Tryptophyl-tyrosyl-methioninium (Tyr-Met) (with W-109)" evidence="1">
    <location>
        <begin position="231"/>
        <end position="257"/>
    </location>
</feature>
<keyword id="KW-0349">Heme</keyword>
<keyword id="KW-0376">Hydrogen peroxide</keyword>
<keyword id="KW-0408">Iron</keyword>
<keyword id="KW-0479">Metal-binding</keyword>
<keyword id="KW-0560">Oxidoreductase</keyword>
<keyword id="KW-0575">Peroxidase</keyword>
<protein>
    <recommendedName>
        <fullName evidence="1">Catalase-peroxidase</fullName>
        <shortName evidence="1">CP</shortName>
        <ecNumber evidence="1">1.11.1.21</ecNumber>
    </recommendedName>
    <alternativeName>
        <fullName evidence="1">Peroxidase/catalase</fullName>
    </alternativeName>
</protein>
<sequence length="742" mass="81161">MSDSCPVAHEGNTQSTSESENPVIPSPTPAANRPRNNRDWWPNQPELSVLHAHTSKSNPMGEDFDYAEEFAKLDVEALKRDVIDLMTTSQDWWPADYGHYGGLFIRMSWHAAGTYRIADGRGGGGQGAQRFAPLNSWPDNANLDKARRLLWPVKQKYGKQISWADLLVFAGNCALESMGFKTFGFGFGREDIWEPEEMYWGPEDTWLGDERYSGDRELSGPLGAVQMGLIYVNPEGPNGQPDPLAAARDIRETFSRMAMNDVETAALIAGGHTFGKTHGAGDADLVGPEPEGAPIEQQGLGWKSAYGTGVGKDAITSGLEVVWTPTPTKWDNSFLEVLYGYEWELTKSPAGAWQWTAKDGAGAGTIPDPFDSSAGRAPTMLTTDLSLRIDPAYEKITRRWLDHPEEFAEEFAKAWYKLLHRDMGPVTRYLGPWVPEAQLWQDPVPAVDHQLIGDSEIAALKGKILDSGLSIPQLVSTAWASAATHRSTDMRGGANGARIRLAPQKDWEINSPAELSTILQTLEQIQQDFNSSQSGGVKVSLADVIVLAGAAAVEKAAKNAGHDVTVPFTPGRTDATQEQTDVESFAVLEPKADGFRNYLRAGEKLPAEALLVDRAYMLNLTAPEMTVLVGGLRALNANFGQTKHGVFTDRPEALTNDFFVNLLDMGTEWKGASSAENVYEGTDRVTGAAKWTATAVDLVFGSNSQLRALAEVYAADDAQQKFVQDFVSAWNKVMNLDRFDLD</sequence>
<name>KATG_RHOJR</name>
<reference key="1">
    <citation type="journal article" date="2006" name="Proc. Natl. Acad. Sci. U.S.A.">
        <title>The complete genome of Rhodococcus sp. RHA1 provides insights into a catabolic powerhouse.</title>
        <authorList>
            <person name="McLeod M.P."/>
            <person name="Warren R.L."/>
            <person name="Hsiao W.W.L."/>
            <person name="Araki N."/>
            <person name="Myhre M."/>
            <person name="Fernandes C."/>
            <person name="Miyazawa D."/>
            <person name="Wong W."/>
            <person name="Lillquist A.L."/>
            <person name="Wang D."/>
            <person name="Dosanjh M."/>
            <person name="Hara H."/>
            <person name="Petrescu A."/>
            <person name="Morin R.D."/>
            <person name="Yang G."/>
            <person name="Stott J.M."/>
            <person name="Schein J.E."/>
            <person name="Shin H."/>
            <person name="Smailus D."/>
            <person name="Siddiqui A.S."/>
            <person name="Marra M.A."/>
            <person name="Jones S.J.M."/>
            <person name="Holt R."/>
            <person name="Brinkman F.S.L."/>
            <person name="Miyauchi K."/>
            <person name="Fukuda M."/>
            <person name="Davies J.E."/>
            <person name="Mohn W.W."/>
            <person name="Eltis L.D."/>
        </authorList>
    </citation>
    <scope>NUCLEOTIDE SEQUENCE [LARGE SCALE GENOMIC DNA]</scope>
    <source>
        <strain>RHA1</strain>
    </source>
</reference>
<accession>Q0S5Y0</accession>
<gene>
    <name evidence="1" type="primary">katG</name>
    <name type="ordered locus">RHA1_ro05275</name>
</gene>
<evidence type="ECO:0000255" key="1">
    <source>
        <dbReference type="HAMAP-Rule" id="MF_01961"/>
    </source>
</evidence>
<evidence type="ECO:0000256" key="2">
    <source>
        <dbReference type="SAM" id="MobiDB-lite"/>
    </source>
</evidence>
<dbReference type="EC" id="1.11.1.21" evidence="1"/>
<dbReference type="EMBL" id="CP000431">
    <property type="protein sequence ID" value="ABG97056.1"/>
    <property type="molecule type" value="Genomic_DNA"/>
</dbReference>
<dbReference type="RefSeq" id="WP_011597474.1">
    <property type="nucleotide sequence ID" value="NC_008268.1"/>
</dbReference>
<dbReference type="SMR" id="Q0S5Y0"/>
<dbReference type="KEGG" id="rha:RHA1_ro05275"/>
<dbReference type="PATRIC" id="fig|101510.16.peg.5329"/>
<dbReference type="eggNOG" id="COG0376">
    <property type="taxonomic scope" value="Bacteria"/>
</dbReference>
<dbReference type="HOGENOM" id="CLU_025424_2_0_11"/>
<dbReference type="OrthoDB" id="9759743at2"/>
<dbReference type="Proteomes" id="UP000008710">
    <property type="component" value="Chromosome"/>
</dbReference>
<dbReference type="GO" id="GO:0005829">
    <property type="term" value="C:cytosol"/>
    <property type="evidence" value="ECO:0007669"/>
    <property type="project" value="TreeGrafter"/>
</dbReference>
<dbReference type="GO" id="GO:0004096">
    <property type="term" value="F:catalase activity"/>
    <property type="evidence" value="ECO:0007669"/>
    <property type="project" value="UniProtKB-UniRule"/>
</dbReference>
<dbReference type="GO" id="GO:0020037">
    <property type="term" value="F:heme binding"/>
    <property type="evidence" value="ECO:0007669"/>
    <property type="project" value="InterPro"/>
</dbReference>
<dbReference type="GO" id="GO:0046872">
    <property type="term" value="F:metal ion binding"/>
    <property type="evidence" value="ECO:0007669"/>
    <property type="project" value="UniProtKB-KW"/>
</dbReference>
<dbReference type="GO" id="GO:0070301">
    <property type="term" value="P:cellular response to hydrogen peroxide"/>
    <property type="evidence" value="ECO:0007669"/>
    <property type="project" value="TreeGrafter"/>
</dbReference>
<dbReference type="GO" id="GO:0042744">
    <property type="term" value="P:hydrogen peroxide catabolic process"/>
    <property type="evidence" value="ECO:0007669"/>
    <property type="project" value="UniProtKB-KW"/>
</dbReference>
<dbReference type="CDD" id="cd00649">
    <property type="entry name" value="catalase_peroxidase_1"/>
    <property type="match status" value="1"/>
</dbReference>
<dbReference type="CDD" id="cd08200">
    <property type="entry name" value="catalase_peroxidase_2"/>
    <property type="match status" value="1"/>
</dbReference>
<dbReference type="FunFam" id="1.10.420.10:FF:000002">
    <property type="entry name" value="Catalase-peroxidase"/>
    <property type="match status" value="1"/>
</dbReference>
<dbReference type="FunFam" id="1.10.420.10:FF:000004">
    <property type="entry name" value="Catalase-peroxidase"/>
    <property type="match status" value="1"/>
</dbReference>
<dbReference type="FunFam" id="1.10.520.10:FF:000002">
    <property type="entry name" value="Catalase-peroxidase"/>
    <property type="match status" value="1"/>
</dbReference>
<dbReference type="Gene3D" id="1.10.520.10">
    <property type="match status" value="2"/>
</dbReference>
<dbReference type="Gene3D" id="1.10.420.10">
    <property type="entry name" value="Peroxidase, domain 2"/>
    <property type="match status" value="2"/>
</dbReference>
<dbReference type="HAMAP" id="MF_01961">
    <property type="entry name" value="Catal_peroxid"/>
    <property type="match status" value="1"/>
</dbReference>
<dbReference type="InterPro" id="IPR000763">
    <property type="entry name" value="Catalase_peroxidase"/>
</dbReference>
<dbReference type="InterPro" id="IPR002016">
    <property type="entry name" value="Haem_peroxidase"/>
</dbReference>
<dbReference type="InterPro" id="IPR010255">
    <property type="entry name" value="Haem_peroxidase_sf"/>
</dbReference>
<dbReference type="InterPro" id="IPR019794">
    <property type="entry name" value="Peroxidases_AS"/>
</dbReference>
<dbReference type="InterPro" id="IPR019793">
    <property type="entry name" value="Peroxidases_heam-ligand_BS"/>
</dbReference>
<dbReference type="NCBIfam" id="TIGR00198">
    <property type="entry name" value="cat_per_HPI"/>
    <property type="match status" value="1"/>
</dbReference>
<dbReference type="NCBIfam" id="NF011635">
    <property type="entry name" value="PRK15061.1"/>
    <property type="match status" value="1"/>
</dbReference>
<dbReference type="PANTHER" id="PTHR30555:SF0">
    <property type="entry name" value="CATALASE-PEROXIDASE"/>
    <property type="match status" value="1"/>
</dbReference>
<dbReference type="PANTHER" id="PTHR30555">
    <property type="entry name" value="HYDROPEROXIDASE I, BIFUNCTIONAL CATALASE-PEROXIDASE"/>
    <property type="match status" value="1"/>
</dbReference>
<dbReference type="Pfam" id="PF00141">
    <property type="entry name" value="peroxidase"/>
    <property type="match status" value="2"/>
</dbReference>
<dbReference type="PRINTS" id="PR00460">
    <property type="entry name" value="BPEROXIDASE"/>
</dbReference>
<dbReference type="PRINTS" id="PR00458">
    <property type="entry name" value="PEROXIDASE"/>
</dbReference>
<dbReference type="SUPFAM" id="SSF48113">
    <property type="entry name" value="Heme-dependent peroxidases"/>
    <property type="match status" value="2"/>
</dbReference>
<dbReference type="PROSITE" id="PS00435">
    <property type="entry name" value="PEROXIDASE_1"/>
    <property type="match status" value="1"/>
</dbReference>
<dbReference type="PROSITE" id="PS00436">
    <property type="entry name" value="PEROXIDASE_2"/>
    <property type="match status" value="1"/>
</dbReference>
<dbReference type="PROSITE" id="PS50873">
    <property type="entry name" value="PEROXIDASE_4"/>
    <property type="match status" value="1"/>
</dbReference>